<sequence>MLDLKLIRQKPEWAKEKLAARAIKGEEIDELLALDTRRRQVTVQTEELKAKRNDVSGQIAVMKRNKENADDQIKAMREVGQKIAALDKELAQLNEKVTYILVRLPNFPADDVPMSLNEDDSREEYKWGNMPTFDFEPKHHWDIGEKLGILDFERAAKVAGSRFVYYKGAGARLERAVYNFFLDEHQKEGYEEIIPPYLVNNDSMFGTGQFPKFTDATYTITNDGEPLTLIPTAEVPLVNYYRNDIVDAEKLPVNFTALTPAFRSEAGSAGRDTRGLIRMHQFNKVEMVKFCKPEDSWKQLQNLIHDAEDLLQKLGLPYHVITLASNDASFTSAKTNDLEVWMPAQDRYREISSCSNCTDFQARRAQIRYRDDDGKLQFVHTLNGSGLAVGRTVASILENYQQADGSVKIPDVLVPYMQGQTAITKED</sequence>
<reference key="1">
    <citation type="submission" date="2008-06" db="EMBL/GenBank/DDBJ databases">
        <title>Lactobacillus casei BL23 complete genome sequence.</title>
        <authorList>
            <person name="Maze A."/>
            <person name="Boel G."/>
            <person name="Bourand A."/>
            <person name="Loux V."/>
            <person name="Gibrat J.F."/>
            <person name="Zuniga M."/>
            <person name="Hartke A."/>
            <person name="Deutscher J."/>
        </authorList>
    </citation>
    <scope>NUCLEOTIDE SEQUENCE [LARGE SCALE GENOMIC DNA]</scope>
    <source>
        <strain>BL23</strain>
    </source>
</reference>
<protein>
    <recommendedName>
        <fullName evidence="1">Serine--tRNA ligase</fullName>
        <ecNumber evidence="1">6.1.1.11</ecNumber>
    </recommendedName>
    <alternativeName>
        <fullName evidence="1">Seryl-tRNA synthetase</fullName>
        <shortName evidence="1">SerRS</shortName>
    </alternativeName>
    <alternativeName>
        <fullName evidence="1">Seryl-tRNA(Ser/Sec) synthetase</fullName>
    </alternativeName>
</protein>
<keyword id="KW-0030">Aminoacyl-tRNA synthetase</keyword>
<keyword id="KW-0067">ATP-binding</keyword>
<keyword id="KW-0963">Cytoplasm</keyword>
<keyword id="KW-0436">Ligase</keyword>
<keyword id="KW-0547">Nucleotide-binding</keyword>
<keyword id="KW-0648">Protein biosynthesis</keyword>
<comment type="function">
    <text evidence="1">Catalyzes the attachment of serine to tRNA(Ser). Is also able to aminoacylate tRNA(Sec) with serine, to form the misacylated tRNA L-seryl-tRNA(Sec), which will be further converted into selenocysteinyl-tRNA(Sec).</text>
</comment>
<comment type="catalytic activity">
    <reaction evidence="1">
        <text>tRNA(Ser) + L-serine + ATP = L-seryl-tRNA(Ser) + AMP + diphosphate + H(+)</text>
        <dbReference type="Rhea" id="RHEA:12292"/>
        <dbReference type="Rhea" id="RHEA-COMP:9669"/>
        <dbReference type="Rhea" id="RHEA-COMP:9703"/>
        <dbReference type="ChEBI" id="CHEBI:15378"/>
        <dbReference type="ChEBI" id="CHEBI:30616"/>
        <dbReference type="ChEBI" id="CHEBI:33019"/>
        <dbReference type="ChEBI" id="CHEBI:33384"/>
        <dbReference type="ChEBI" id="CHEBI:78442"/>
        <dbReference type="ChEBI" id="CHEBI:78533"/>
        <dbReference type="ChEBI" id="CHEBI:456215"/>
        <dbReference type="EC" id="6.1.1.11"/>
    </reaction>
</comment>
<comment type="catalytic activity">
    <reaction evidence="1">
        <text>tRNA(Sec) + L-serine + ATP = L-seryl-tRNA(Sec) + AMP + diphosphate + H(+)</text>
        <dbReference type="Rhea" id="RHEA:42580"/>
        <dbReference type="Rhea" id="RHEA-COMP:9742"/>
        <dbReference type="Rhea" id="RHEA-COMP:10128"/>
        <dbReference type="ChEBI" id="CHEBI:15378"/>
        <dbReference type="ChEBI" id="CHEBI:30616"/>
        <dbReference type="ChEBI" id="CHEBI:33019"/>
        <dbReference type="ChEBI" id="CHEBI:33384"/>
        <dbReference type="ChEBI" id="CHEBI:78442"/>
        <dbReference type="ChEBI" id="CHEBI:78533"/>
        <dbReference type="ChEBI" id="CHEBI:456215"/>
        <dbReference type="EC" id="6.1.1.11"/>
    </reaction>
</comment>
<comment type="pathway">
    <text evidence="1">Aminoacyl-tRNA biosynthesis; selenocysteinyl-tRNA(Sec) biosynthesis; L-seryl-tRNA(Sec) from L-serine and tRNA(Sec): step 1/1.</text>
</comment>
<comment type="subunit">
    <text evidence="1">Homodimer. The tRNA molecule binds across the dimer.</text>
</comment>
<comment type="subcellular location">
    <subcellularLocation>
        <location evidence="1">Cytoplasm</location>
    </subcellularLocation>
</comment>
<comment type="domain">
    <text evidence="1">Consists of two distinct domains, a catalytic core and a N-terminal extension that is involved in tRNA binding.</text>
</comment>
<comment type="similarity">
    <text evidence="1">Belongs to the class-II aminoacyl-tRNA synthetase family. Type-1 seryl-tRNA synthetase subfamily.</text>
</comment>
<name>SYS_LACCB</name>
<dbReference type="EC" id="6.1.1.11" evidence="1"/>
<dbReference type="EMBL" id="FM177140">
    <property type="protein sequence ID" value="CAQ67126.1"/>
    <property type="molecule type" value="Genomic_DNA"/>
</dbReference>
<dbReference type="SMR" id="B3W8V7"/>
<dbReference type="KEGG" id="lcb:LCABL_20590"/>
<dbReference type="HOGENOM" id="CLU_023797_1_1_9"/>
<dbReference type="UniPathway" id="UPA00906">
    <property type="reaction ID" value="UER00895"/>
</dbReference>
<dbReference type="GO" id="GO:0005737">
    <property type="term" value="C:cytoplasm"/>
    <property type="evidence" value="ECO:0007669"/>
    <property type="project" value="UniProtKB-SubCell"/>
</dbReference>
<dbReference type="GO" id="GO:0005524">
    <property type="term" value="F:ATP binding"/>
    <property type="evidence" value="ECO:0007669"/>
    <property type="project" value="UniProtKB-UniRule"/>
</dbReference>
<dbReference type="GO" id="GO:0140096">
    <property type="term" value="F:catalytic activity, acting on a protein"/>
    <property type="evidence" value="ECO:0007669"/>
    <property type="project" value="UniProtKB-ARBA"/>
</dbReference>
<dbReference type="GO" id="GO:0004828">
    <property type="term" value="F:serine-tRNA ligase activity"/>
    <property type="evidence" value="ECO:0007669"/>
    <property type="project" value="UniProtKB-UniRule"/>
</dbReference>
<dbReference type="GO" id="GO:0016740">
    <property type="term" value="F:transferase activity"/>
    <property type="evidence" value="ECO:0007669"/>
    <property type="project" value="UniProtKB-ARBA"/>
</dbReference>
<dbReference type="GO" id="GO:0016260">
    <property type="term" value="P:selenocysteine biosynthetic process"/>
    <property type="evidence" value="ECO:0007669"/>
    <property type="project" value="UniProtKB-UniRule"/>
</dbReference>
<dbReference type="GO" id="GO:0006434">
    <property type="term" value="P:seryl-tRNA aminoacylation"/>
    <property type="evidence" value="ECO:0007669"/>
    <property type="project" value="UniProtKB-UniRule"/>
</dbReference>
<dbReference type="CDD" id="cd00770">
    <property type="entry name" value="SerRS_core"/>
    <property type="match status" value="1"/>
</dbReference>
<dbReference type="Gene3D" id="3.30.930.10">
    <property type="entry name" value="Bira Bifunctional Protein, Domain 2"/>
    <property type="match status" value="1"/>
</dbReference>
<dbReference type="Gene3D" id="1.10.287.40">
    <property type="entry name" value="Serine-tRNA synthetase, tRNA binding domain"/>
    <property type="match status" value="1"/>
</dbReference>
<dbReference type="HAMAP" id="MF_00176">
    <property type="entry name" value="Ser_tRNA_synth_type1"/>
    <property type="match status" value="1"/>
</dbReference>
<dbReference type="InterPro" id="IPR002314">
    <property type="entry name" value="aa-tRNA-synt_IIb"/>
</dbReference>
<dbReference type="InterPro" id="IPR006195">
    <property type="entry name" value="aa-tRNA-synth_II"/>
</dbReference>
<dbReference type="InterPro" id="IPR045864">
    <property type="entry name" value="aa-tRNA-synth_II/BPL/LPL"/>
</dbReference>
<dbReference type="InterPro" id="IPR002317">
    <property type="entry name" value="Ser-tRNA-ligase_type_1"/>
</dbReference>
<dbReference type="InterPro" id="IPR015866">
    <property type="entry name" value="Ser-tRNA-synth_1_N"/>
</dbReference>
<dbReference type="InterPro" id="IPR042103">
    <property type="entry name" value="SerRS_1_N_sf"/>
</dbReference>
<dbReference type="InterPro" id="IPR033729">
    <property type="entry name" value="SerRS_core"/>
</dbReference>
<dbReference type="InterPro" id="IPR010978">
    <property type="entry name" value="tRNA-bd_arm"/>
</dbReference>
<dbReference type="NCBIfam" id="TIGR00414">
    <property type="entry name" value="serS"/>
    <property type="match status" value="1"/>
</dbReference>
<dbReference type="PANTHER" id="PTHR43697:SF1">
    <property type="entry name" value="SERINE--TRNA LIGASE"/>
    <property type="match status" value="1"/>
</dbReference>
<dbReference type="PANTHER" id="PTHR43697">
    <property type="entry name" value="SERYL-TRNA SYNTHETASE"/>
    <property type="match status" value="1"/>
</dbReference>
<dbReference type="Pfam" id="PF02403">
    <property type="entry name" value="Seryl_tRNA_N"/>
    <property type="match status" value="1"/>
</dbReference>
<dbReference type="Pfam" id="PF00587">
    <property type="entry name" value="tRNA-synt_2b"/>
    <property type="match status" value="1"/>
</dbReference>
<dbReference type="PIRSF" id="PIRSF001529">
    <property type="entry name" value="Ser-tRNA-synth_IIa"/>
    <property type="match status" value="1"/>
</dbReference>
<dbReference type="PRINTS" id="PR00981">
    <property type="entry name" value="TRNASYNTHSER"/>
</dbReference>
<dbReference type="SUPFAM" id="SSF55681">
    <property type="entry name" value="Class II aaRS and biotin synthetases"/>
    <property type="match status" value="1"/>
</dbReference>
<dbReference type="SUPFAM" id="SSF46589">
    <property type="entry name" value="tRNA-binding arm"/>
    <property type="match status" value="1"/>
</dbReference>
<dbReference type="PROSITE" id="PS50862">
    <property type="entry name" value="AA_TRNA_LIGASE_II"/>
    <property type="match status" value="1"/>
</dbReference>
<gene>
    <name evidence="1" type="primary">serS</name>
    <name type="ordered locus">LCABL_20590</name>
</gene>
<evidence type="ECO:0000255" key="1">
    <source>
        <dbReference type="HAMAP-Rule" id="MF_00176"/>
    </source>
</evidence>
<proteinExistence type="inferred from homology"/>
<accession>B3W8V7</accession>
<organism>
    <name type="scientific">Lacticaseibacillus casei (strain BL23)</name>
    <name type="common">Lactobacillus casei</name>
    <dbReference type="NCBI Taxonomy" id="543734"/>
    <lineage>
        <taxon>Bacteria</taxon>
        <taxon>Bacillati</taxon>
        <taxon>Bacillota</taxon>
        <taxon>Bacilli</taxon>
        <taxon>Lactobacillales</taxon>
        <taxon>Lactobacillaceae</taxon>
        <taxon>Lacticaseibacillus</taxon>
    </lineage>
</organism>
<feature type="chain" id="PRO_1000098083" description="Serine--tRNA ligase">
    <location>
        <begin position="1"/>
        <end position="427"/>
    </location>
</feature>
<feature type="binding site" evidence="1">
    <location>
        <begin position="232"/>
        <end position="234"/>
    </location>
    <ligand>
        <name>L-serine</name>
        <dbReference type="ChEBI" id="CHEBI:33384"/>
    </ligand>
</feature>
<feature type="binding site" evidence="1">
    <location>
        <begin position="263"/>
        <end position="265"/>
    </location>
    <ligand>
        <name>ATP</name>
        <dbReference type="ChEBI" id="CHEBI:30616"/>
    </ligand>
</feature>
<feature type="binding site" evidence="1">
    <location>
        <position position="286"/>
    </location>
    <ligand>
        <name>L-serine</name>
        <dbReference type="ChEBI" id="CHEBI:33384"/>
    </ligand>
</feature>
<feature type="binding site" evidence="1">
    <location>
        <begin position="350"/>
        <end position="353"/>
    </location>
    <ligand>
        <name>ATP</name>
        <dbReference type="ChEBI" id="CHEBI:30616"/>
    </ligand>
</feature>
<feature type="binding site" evidence="1">
    <location>
        <position position="385"/>
    </location>
    <ligand>
        <name>L-serine</name>
        <dbReference type="ChEBI" id="CHEBI:33384"/>
    </ligand>
</feature>